<dbReference type="EMBL" id="AB007638">
    <property type="protein sequence ID" value="BAA22768.1"/>
    <property type="molecule type" value="Genomic_DNA"/>
</dbReference>
<dbReference type="EMBL" id="AL009126">
    <property type="protein sequence ID" value="CAB12444.1"/>
    <property type="molecule type" value="Genomic_DNA"/>
</dbReference>
<dbReference type="EMBL" id="M22905">
    <property type="protein sequence ID" value="AAA22821.1"/>
    <property type="molecule type" value="Genomic_DNA"/>
</dbReference>
<dbReference type="PIR" id="A69790">
    <property type="entry name" value="A69790"/>
</dbReference>
<dbReference type="RefSeq" id="WP_003234013.1">
    <property type="nucleotide sequence ID" value="NZ_OZ025638.1"/>
</dbReference>
<dbReference type="SMR" id="P40775"/>
<dbReference type="FunCoup" id="P40775">
    <property type="interactions" value="41"/>
</dbReference>
<dbReference type="STRING" id="224308.BSU06250"/>
<dbReference type="PaxDb" id="224308-BSU06250"/>
<dbReference type="EnsemblBacteria" id="CAB12444">
    <property type="protein sequence ID" value="CAB12444"/>
    <property type="gene ID" value="BSU_06250"/>
</dbReference>
<dbReference type="GeneID" id="936017"/>
<dbReference type="KEGG" id="bsu:BSU06250"/>
<dbReference type="PATRIC" id="fig|224308.43.peg.658"/>
<dbReference type="eggNOG" id="COG0797">
    <property type="taxonomic scope" value="Bacteria"/>
</dbReference>
<dbReference type="InParanoid" id="P40775"/>
<dbReference type="OrthoDB" id="2917841at2"/>
<dbReference type="BioCyc" id="BSUB:BSU06250-MONOMER"/>
<dbReference type="Proteomes" id="UP000001570">
    <property type="component" value="Chromosome"/>
</dbReference>
<dbReference type="CDD" id="cd22268">
    <property type="entry name" value="DPBB_RlpA-like"/>
    <property type="match status" value="1"/>
</dbReference>
<dbReference type="InterPro" id="IPR009009">
    <property type="entry name" value="RlpA-like_DPBB"/>
</dbReference>
<dbReference type="Pfam" id="PF03330">
    <property type="entry name" value="DPBB_1"/>
    <property type="match status" value="1"/>
</dbReference>
<keyword id="KW-1185">Reference proteome</keyword>
<gene>
    <name type="primary">ydjM</name>
    <name type="synonym">yzvA</name>
    <name type="ordered locus">BSU06250</name>
</gene>
<sequence length="123" mass="13177">MLKKVILAAFILVGSTLGAFSFSSDASAKHVNGNITWYNGVGKKGSSGKKLGHWDCATKIGFDVPRNGTKIRAYAKAKPKKVITVYKNDVGRMPNAVLDVSPKAFKALGYPLSKGKVAGHYSY</sequence>
<proteinExistence type="evidence at transcript level"/>
<name>YDJM_BACSU</name>
<evidence type="ECO:0000269" key="1">
    <source>
    </source>
</evidence>
<evidence type="ECO:0000305" key="2"/>
<feature type="chain" id="PRO_0000049512" description="Uncharacterized protein YdjM">
    <location>
        <begin position="1"/>
        <end position="123"/>
    </location>
</feature>
<feature type="sequence conflict" description="In Ref. 3." evidence="2" ref="3">
    <original>TLGAFSFSSD</original>
    <variation>GDPLESTAAA</variation>
    <location>
        <begin position="16"/>
        <end position="25"/>
    </location>
</feature>
<protein>
    <recommendedName>
        <fullName>Uncharacterized protein YdjM</fullName>
    </recommendedName>
    <alternativeName>
        <fullName>PSPA13</fullName>
    </alternativeName>
</protein>
<organism>
    <name type="scientific">Bacillus subtilis (strain 168)</name>
    <dbReference type="NCBI Taxonomy" id="224308"/>
    <lineage>
        <taxon>Bacteria</taxon>
        <taxon>Bacillati</taxon>
        <taxon>Bacillota</taxon>
        <taxon>Bacilli</taxon>
        <taxon>Bacillales</taxon>
        <taxon>Bacillaceae</taxon>
        <taxon>Bacillus</taxon>
    </lineage>
</organism>
<reference key="1">
    <citation type="journal article" date="1997" name="DNA Res.">
        <title>Sequence analysis of the groESL-cotA region of the Bacillus subtilis genome, containing the restriction/modification system genes.</title>
        <authorList>
            <person name="Kasahara Y."/>
            <person name="Nakai S."/>
            <person name="Ogasawara N."/>
            <person name="Yata K."/>
            <person name="Sadaie Y."/>
        </authorList>
    </citation>
    <scope>NUCLEOTIDE SEQUENCE [GENOMIC DNA]</scope>
    <source>
        <strain>168 / Marburg / ATCC 6051 / DSM 10 / JCM 1465 / NBRC 13719 / NCIMB 3610 / NRRL NRS-744 / VKM B-501</strain>
    </source>
</reference>
<reference key="2">
    <citation type="journal article" date="1997" name="Nature">
        <title>The complete genome sequence of the Gram-positive bacterium Bacillus subtilis.</title>
        <authorList>
            <person name="Kunst F."/>
            <person name="Ogasawara N."/>
            <person name="Moszer I."/>
            <person name="Albertini A.M."/>
            <person name="Alloni G."/>
            <person name="Azevedo V."/>
            <person name="Bertero M.G."/>
            <person name="Bessieres P."/>
            <person name="Bolotin A."/>
            <person name="Borchert S."/>
            <person name="Borriss R."/>
            <person name="Boursier L."/>
            <person name="Brans A."/>
            <person name="Braun M."/>
            <person name="Brignell S.C."/>
            <person name="Bron S."/>
            <person name="Brouillet S."/>
            <person name="Bruschi C.V."/>
            <person name="Caldwell B."/>
            <person name="Capuano V."/>
            <person name="Carter N.M."/>
            <person name="Choi S.-K."/>
            <person name="Codani J.-J."/>
            <person name="Connerton I.F."/>
            <person name="Cummings N.J."/>
            <person name="Daniel R.A."/>
            <person name="Denizot F."/>
            <person name="Devine K.M."/>
            <person name="Duesterhoeft A."/>
            <person name="Ehrlich S.D."/>
            <person name="Emmerson P.T."/>
            <person name="Entian K.-D."/>
            <person name="Errington J."/>
            <person name="Fabret C."/>
            <person name="Ferrari E."/>
            <person name="Foulger D."/>
            <person name="Fritz C."/>
            <person name="Fujita M."/>
            <person name="Fujita Y."/>
            <person name="Fuma S."/>
            <person name="Galizzi A."/>
            <person name="Galleron N."/>
            <person name="Ghim S.-Y."/>
            <person name="Glaser P."/>
            <person name="Goffeau A."/>
            <person name="Golightly E.J."/>
            <person name="Grandi G."/>
            <person name="Guiseppi G."/>
            <person name="Guy B.J."/>
            <person name="Haga K."/>
            <person name="Haiech J."/>
            <person name="Harwood C.R."/>
            <person name="Henaut A."/>
            <person name="Hilbert H."/>
            <person name="Holsappel S."/>
            <person name="Hosono S."/>
            <person name="Hullo M.-F."/>
            <person name="Itaya M."/>
            <person name="Jones L.-M."/>
            <person name="Joris B."/>
            <person name="Karamata D."/>
            <person name="Kasahara Y."/>
            <person name="Klaerr-Blanchard M."/>
            <person name="Klein C."/>
            <person name="Kobayashi Y."/>
            <person name="Koetter P."/>
            <person name="Koningstein G."/>
            <person name="Krogh S."/>
            <person name="Kumano M."/>
            <person name="Kurita K."/>
            <person name="Lapidus A."/>
            <person name="Lardinois S."/>
            <person name="Lauber J."/>
            <person name="Lazarevic V."/>
            <person name="Lee S.-M."/>
            <person name="Levine A."/>
            <person name="Liu H."/>
            <person name="Masuda S."/>
            <person name="Mauel C."/>
            <person name="Medigue C."/>
            <person name="Medina N."/>
            <person name="Mellado R.P."/>
            <person name="Mizuno M."/>
            <person name="Moestl D."/>
            <person name="Nakai S."/>
            <person name="Noback M."/>
            <person name="Noone D."/>
            <person name="O'Reilly M."/>
            <person name="Ogawa K."/>
            <person name="Ogiwara A."/>
            <person name="Oudega B."/>
            <person name="Park S.-H."/>
            <person name="Parro V."/>
            <person name="Pohl T.M."/>
            <person name="Portetelle D."/>
            <person name="Porwollik S."/>
            <person name="Prescott A.M."/>
            <person name="Presecan E."/>
            <person name="Pujic P."/>
            <person name="Purnelle B."/>
            <person name="Rapoport G."/>
            <person name="Rey M."/>
            <person name="Reynolds S."/>
            <person name="Rieger M."/>
            <person name="Rivolta C."/>
            <person name="Rocha E."/>
            <person name="Roche B."/>
            <person name="Rose M."/>
            <person name="Sadaie Y."/>
            <person name="Sato T."/>
            <person name="Scanlan E."/>
            <person name="Schleich S."/>
            <person name="Schroeter R."/>
            <person name="Scoffone F."/>
            <person name="Sekiguchi J."/>
            <person name="Sekowska A."/>
            <person name="Seror S.J."/>
            <person name="Serror P."/>
            <person name="Shin B.-S."/>
            <person name="Soldo B."/>
            <person name="Sorokin A."/>
            <person name="Tacconi E."/>
            <person name="Takagi T."/>
            <person name="Takahashi H."/>
            <person name="Takemaru K."/>
            <person name="Takeuchi M."/>
            <person name="Tamakoshi A."/>
            <person name="Tanaka T."/>
            <person name="Terpstra P."/>
            <person name="Tognoni A."/>
            <person name="Tosato V."/>
            <person name="Uchiyama S."/>
            <person name="Vandenbol M."/>
            <person name="Vannier F."/>
            <person name="Vassarotti A."/>
            <person name="Viari A."/>
            <person name="Wambutt R."/>
            <person name="Wedler E."/>
            <person name="Wedler H."/>
            <person name="Weitzenegger T."/>
            <person name="Winters P."/>
            <person name="Wipat A."/>
            <person name="Yamamoto H."/>
            <person name="Yamane K."/>
            <person name="Yasumoto K."/>
            <person name="Yata K."/>
            <person name="Yoshida K."/>
            <person name="Yoshikawa H.-F."/>
            <person name="Zumstein E."/>
            <person name="Yoshikawa H."/>
            <person name="Danchin A."/>
        </authorList>
    </citation>
    <scope>NUCLEOTIDE SEQUENCE [LARGE SCALE GENOMIC DNA]</scope>
    <source>
        <strain>168</strain>
    </source>
</reference>
<reference key="3">
    <citation type="journal article" date="1988" name="Gene">
        <title>Characterization of signal-sequence-coding regions selected from the Bacillus subtilis chromosome.</title>
        <authorList>
            <person name="Smith H."/>
            <person name="de Jong A."/>
            <person name="Bron S."/>
            <person name="Venema G."/>
        </authorList>
    </citation>
    <scope>NUCLEOTIDE SEQUENCE [GENOMIC DNA] OF 1-26</scope>
</reference>
<reference key="4">
    <citation type="journal article" date="2007" name="Mol. Microbiol.">
        <title>The essential YycFG two-component system controls cell wall metabolism in Bacillus subtilis.</title>
        <authorList>
            <person name="Bisicchia P."/>
            <person name="Noone D."/>
            <person name="Lioliou E."/>
            <person name="Howell A."/>
            <person name="Quigley S."/>
            <person name="Jensen T."/>
            <person name="Jarmer H."/>
            <person name="Devine K.M."/>
        </authorList>
    </citation>
    <scope>INDUCTION BY YYCFG</scope>
</reference>
<accession>P40775</accession>
<accession>O34729</accession>
<comment type="induction">
    <text evidence="1">Positively regulated by the two-component system YycFG. Expression is maximal during exponential growth.</text>
</comment>